<sequence length="446" mass="50150">MDASGVIDELKHRKEAFVTGHSGSSIADLRDVTLAGIFSNAAWIYVVSNNPSYRDSFWLDFLLNWMGLLCSVTVFGENPFLTGILGLSAVLLFGCISKGSKRETIKETVMDNGNQSATLTVYRSTMLILTSIAILAVDFPIFPRKYAKVETWGISLMDLGVGSFVFSNGIISYKRLKSGTELSKWAKIKQSLRSTVVLVVLGFIRLFSVKAVNYQEHATEYGIHWNFFFTLSLLPLAMIIFDFYNMRLRFVIGLIAAIIYELCLIYHPTFLDYLLNAERIDFISANREGIFSFVGYCIIYLAGQQVGSMFFPISRNPMQLLWKLVALSIFSSAISYVLLHYHPLQVSRRFASIGYSSMVISFNLLILTFDQLIVECLTSKPRVPKTYRAVNGNGMLVFLISNVTTGMVNFTFNTLDSPPYKAMAILTVYALFLAVFALKVPFKLKF</sequence>
<organism>
    <name type="scientific">Kluyveromyces lactis (strain ATCC 8585 / CBS 2359 / DSM 70799 / NBRC 1267 / NRRL Y-1140 / WM37)</name>
    <name type="common">Yeast</name>
    <name type="synonym">Candida sphaerica</name>
    <dbReference type="NCBI Taxonomy" id="284590"/>
    <lineage>
        <taxon>Eukaryota</taxon>
        <taxon>Fungi</taxon>
        <taxon>Dikarya</taxon>
        <taxon>Ascomycota</taxon>
        <taxon>Saccharomycotina</taxon>
        <taxon>Saccharomycetes</taxon>
        <taxon>Saccharomycetales</taxon>
        <taxon>Saccharomycetaceae</taxon>
        <taxon>Kluyveromyces</taxon>
    </lineage>
</organism>
<keyword id="KW-0012">Acyltransferase</keyword>
<keyword id="KW-0256">Endoplasmic reticulum</keyword>
<keyword id="KW-0325">Glycoprotein</keyword>
<keyword id="KW-0337">GPI-anchor biosynthesis</keyword>
<keyword id="KW-0472">Membrane</keyword>
<keyword id="KW-1185">Reference proteome</keyword>
<keyword id="KW-0808">Transferase</keyword>
<keyword id="KW-0812">Transmembrane</keyword>
<keyword id="KW-1133">Transmembrane helix</keyword>
<protein>
    <recommendedName>
        <fullName>GPI-anchored wall transfer protein 1</fullName>
        <ecNumber>2.3.-.-</ecNumber>
    </recommendedName>
</protein>
<accession>Q6CK18</accession>
<evidence type="ECO:0000250" key="1"/>
<evidence type="ECO:0000255" key="2"/>
<evidence type="ECO:0000305" key="3"/>
<comment type="function">
    <text evidence="1">Probable acetyltransferase, which acetylates the inositol ring of phosphatidylinositol during biosynthesis of GPI-anchor.</text>
</comment>
<comment type="pathway">
    <text>Glycolipid biosynthesis; glycosylphosphatidylinositol-anchor biosynthesis.</text>
</comment>
<comment type="subcellular location">
    <subcellularLocation>
        <location evidence="1">Endoplasmic reticulum membrane</location>
        <topology evidence="1">Multi-pass membrane protein</topology>
    </subcellularLocation>
</comment>
<comment type="similarity">
    <text evidence="3">Belongs to the PIGW family.</text>
</comment>
<proteinExistence type="inferred from homology"/>
<dbReference type="EC" id="2.3.-.-"/>
<dbReference type="EMBL" id="CR382126">
    <property type="protein sequence ID" value="CAG98429.1"/>
    <property type="molecule type" value="Genomic_DNA"/>
</dbReference>
<dbReference type="RefSeq" id="XP_455721.1">
    <property type="nucleotide sequence ID" value="XM_455721.1"/>
</dbReference>
<dbReference type="SMR" id="Q6CK18"/>
<dbReference type="FunCoup" id="Q6CK18">
    <property type="interactions" value="587"/>
</dbReference>
<dbReference type="STRING" id="284590.Q6CK18"/>
<dbReference type="GlyCosmos" id="Q6CK18">
    <property type="glycosylation" value="1 site, No reported glycans"/>
</dbReference>
<dbReference type="PaxDb" id="284590-Q6CK18"/>
<dbReference type="KEGG" id="kla:KLLA0_F14278g"/>
<dbReference type="eggNOG" id="KOG0411">
    <property type="taxonomic scope" value="Eukaryota"/>
</dbReference>
<dbReference type="HOGENOM" id="CLU_020802_2_2_1"/>
<dbReference type="InParanoid" id="Q6CK18"/>
<dbReference type="OMA" id="GLYVMQP"/>
<dbReference type="UniPathway" id="UPA00196"/>
<dbReference type="Proteomes" id="UP000000598">
    <property type="component" value="Chromosome F"/>
</dbReference>
<dbReference type="GO" id="GO:0005789">
    <property type="term" value="C:endoplasmic reticulum membrane"/>
    <property type="evidence" value="ECO:0007669"/>
    <property type="project" value="UniProtKB-SubCell"/>
</dbReference>
<dbReference type="GO" id="GO:0032216">
    <property type="term" value="F:glucosaminyl-phosphatidylinositol O-acyltransferase activity"/>
    <property type="evidence" value="ECO:0007669"/>
    <property type="project" value="TreeGrafter"/>
</dbReference>
<dbReference type="GO" id="GO:0006506">
    <property type="term" value="P:GPI anchor biosynthetic process"/>
    <property type="evidence" value="ECO:0007669"/>
    <property type="project" value="UniProtKB-UniPathway"/>
</dbReference>
<dbReference type="GO" id="GO:0072659">
    <property type="term" value="P:protein localization to plasma membrane"/>
    <property type="evidence" value="ECO:0007669"/>
    <property type="project" value="TreeGrafter"/>
</dbReference>
<dbReference type="InterPro" id="IPR009447">
    <property type="entry name" value="PIGW/GWT1"/>
</dbReference>
<dbReference type="PANTHER" id="PTHR20661">
    <property type="entry name" value="PHOSPHATIDYLINOSITOL-GLYCAN BIOSYNTHESIS CLASS W PROTEIN"/>
    <property type="match status" value="1"/>
</dbReference>
<dbReference type="PANTHER" id="PTHR20661:SF0">
    <property type="entry name" value="PHOSPHATIDYLINOSITOL-GLYCAN BIOSYNTHESIS CLASS W PROTEIN"/>
    <property type="match status" value="1"/>
</dbReference>
<dbReference type="Pfam" id="PF06423">
    <property type="entry name" value="GWT1"/>
    <property type="match status" value="1"/>
</dbReference>
<dbReference type="PIRSF" id="PIRSF017321">
    <property type="entry name" value="GWT1"/>
    <property type="match status" value="1"/>
</dbReference>
<name>GWT1_KLULA</name>
<reference key="1">
    <citation type="journal article" date="2004" name="Nature">
        <title>Genome evolution in yeasts.</title>
        <authorList>
            <person name="Dujon B."/>
            <person name="Sherman D."/>
            <person name="Fischer G."/>
            <person name="Durrens P."/>
            <person name="Casaregola S."/>
            <person name="Lafontaine I."/>
            <person name="de Montigny J."/>
            <person name="Marck C."/>
            <person name="Neuveglise C."/>
            <person name="Talla E."/>
            <person name="Goffard N."/>
            <person name="Frangeul L."/>
            <person name="Aigle M."/>
            <person name="Anthouard V."/>
            <person name="Babour A."/>
            <person name="Barbe V."/>
            <person name="Barnay S."/>
            <person name="Blanchin S."/>
            <person name="Beckerich J.-M."/>
            <person name="Beyne E."/>
            <person name="Bleykasten C."/>
            <person name="Boisrame A."/>
            <person name="Boyer J."/>
            <person name="Cattolico L."/>
            <person name="Confanioleri F."/>
            <person name="de Daruvar A."/>
            <person name="Despons L."/>
            <person name="Fabre E."/>
            <person name="Fairhead C."/>
            <person name="Ferry-Dumazet H."/>
            <person name="Groppi A."/>
            <person name="Hantraye F."/>
            <person name="Hennequin C."/>
            <person name="Jauniaux N."/>
            <person name="Joyet P."/>
            <person name="Kachouri R."/>
            <person name="Kerrest A."/>
            <person name="Koszul R."/>
            <person name="Lemaire M."/>
            <person name="Lesur I."/>
            <person name="Ma L."/>
            <person name="Muller H."/>
            <person name="Nicaud J.-M."/>
            <person name="Nikolski M."/>
            <person name="Oztas S."/>
            <person name="Ozier-Kalogeropoulos O."/>
            <person name="Pellenz S."/>
            <person name="Potier S."/>
            <person name="Richard G.-F."/>
            <person name="Straub M.-L."/>
            <person name="Suleau A."/>
            <person name="Swennen D."/>
            <person name="Tekaia F."/>
            <person name="Wesolowski-Louvel M."/>
            <person name="Westhof E."/>
            <person name="Wirth B."/>
            <person name="Zeniou-Meyer M."/>
            <person name="Zivanovic Y."/>
            <person name="Bolotin-Fukuhara M."/>
            <person name="Thierry A."/>
            <person name="Bouchier C."/>
            <person name="Caudron B."/>
            <person name="Scarpelli C."/>
            <person name="Gaillardin C."/>
            <person name="Weissenbach J."/>
            <person name="Wincker P."/>
            <person name="Souciet J.-L."/>
        </authorList>
    </citation>
    <scope>NUCLEOTIDE SEQUENCE [LARGE SCALE GENOMIC DNA]</scope>
    <source>
        <strain>ATCC 8585 / CBS 2359 / DSM 70799 / NBRC 1267 / NRRL Y-1140 / WM37</strain>
    </source>
</reference>
<feature type="chain" id="PRO_0000246292" description="GPI-anchored wall transfer protein 1">
    <location>
        <begin position="1"/>
        <end position="446"/>
    </location>
</feature>
<feature type="transmembrane region" description="Helical" evidence="2">
    <location>
        <begin position="32"/>
        <end position="52"/>
    </location>
</feature>
<feature type="transmembrane region" description="Helical" evidence="2">
    <location>
        <begin position="56"/>
        <end position="75"/>
    </location>
</feature>
<feature type="transmembrane region" description="Helical" evidence="2">
    <location>
        <begin position="76"/>
        <end position="94"/>
    </location>
</feature>
<feature type="transmembrane region" description="Helical" evidence="2">
    <location>
        <begin position="122"/>
        <end position="142"/>
    </location>
</feature>
<feature type="transmembrane region" description="Helical" evidence="2">
    <location>
        <begin position="151"/>
        <end position="171"/>
    </location>
</feature>
<feature type="transmembrane region" description="Helical" evidence="2">
    <location>
        <begin position="194"/>
        <end position="214"/>
    </location>
</feature>
<feature type="transmembrane region" description="Helical" evidence="2">
    <location>
        <begin position="221"/>
        <end position="241"/>
    </location>
</feature>
<feature type="transmembrane region" description="Helical" evidence="2">
    <location>
        <begin position="250"/>
        <end position="270"/>
    </location>
</feature>
<feature type="transmembrane region" description="Helical" evidence="2">
    <location>
        <begin position="293"/>
        <end position="313"/>
    </location>
</feature>
<feature type="transmembrane region" description="Helical" evidence="2">
    <location>
        <begin position="320"/>
        <end position="340"/>
    </location>
</feature>
<feature type="transmembrane region" description="Helical" evidence="2">
    <location>
        <begin position="350"/>
        <end position="370"/>
    </location>
</feature>
<feature type="transmembrane region" description="Helical" evidence="2">
    <location>
        <begin position="395"/>
        <end position="415"/>
    </location>
</feature>
<feature type="transmembrane region" description="Helical" evidence="2">
    <location>
        <begin position="422"/>
        <end position="442"/>
    </location>
</feature>
<feature type="glycosylation site" description="N-linked (GlcNAc...) asparagine" evidence="2">
    <location>
        <position position="114"/>
    </location>
</feature>
<gene>
    <name type="primary">GWT1</name>
    <name type="ordered locus">KLLA0F14278g</name>
</gene>